<evidence type="ECO:0000250" key="1"/>
<evidence type="ECO:0000250" key="2">
    <source>
        <dbReference type="UniProtKB" id="P01579"/>
    </source>
</evidence>
<evidence type="ECO:0000250" key="3">
    <source>
        <dbReference type="UniProtKB" id="P01580"/>
    </source>
</evidence>
<evidence type="ECO:0000255" key="4"/>
<evidence type="ECO:0000305" key="5"/>
<accession>O35497</accession>
<proteinExistence type="evidence at transcript level"/>
<feature type="signal peptide" evidence="1">
    <location>
        <begin position="1"/>
        <end position="23"/>
    </location>
</feature>
<feature type="chain" id="PRO_0000253749" description="Interferon gamma">
    <location>
        <begin position="24"/>
        <end position="174"/>
    </location>
</feature>
<feature type="modified residue" description="Pyrrolidone carboxylic acid" evidence="2">
    <location>
        <position position="24"/>
    </location>
</feature>
<feature type="glycosylation site" description="N-linked (GlcNAc...) asparagine" evidence="4">
    <location>
        <position position="39"/>
    </location>
</feature>
<feature type="glycosylation site" description="N-linked (GlcNAc...) asparagine" evidence="4">
    <location>
        <position position="106"/>
    </location>
</feature>
<protein>
    <recommendedName>
        <fullName>Interferon gamma</fullName>
        <shortName>IFN-gamma</shortName>
    </recommendedName>
</protein>
<gene>
    <name type="primary">IFNG</name>
</gene>
<name>IFNG_MESAU</name>
<comment type="function">
    <text evidence="2 3">Type II interferon produced by immune cells such as T-cells and NK cells that plays crucial roles in antimicrobial, antiviral, and antitumor responses by activating effector immune cells and enhancing antigen presentation. Primarily signals through the JAK-STAT pathway after interaction with its receptor IFNGR1 to affect gene regulation. Upon IFNG binding, IFNGR1 intracellular domain opens out to allow association of downstream signaling components JAK2, JAK1 and STAT1, leading to STAT1 activation, nuclear translocation and transcription of IFNG-regulated genes. Many of the induced genes are transcription factors such as IRF1 that are able to further drive regulation of a next wave of transcription. Plays a role in class I antigen presentation pathway by inducing a replacement of catalytic proteasome subunits with immunoproteasome subunits. In turn, increases the quantity, quality, and repertoire of peptides for class I MHC loading. Increases the efficiency of peptide generation also by inducing the expression of activator PA28 that associates with the proteasome and alters its proteolytic cleavage preference. Up-regulates as well MHC II complexes on the cell surface by promoting expression of several key molecules such as cathepsins B/CTSB, H/CTSH, and L/CTSL (By similarity). Participates in the regulation of hematopoietic stem cells during development and under homeostatic conditions by affecting their development, quiescence, and differentiation (By similarity).</text>
</comment>
<comment type="subunit">
    <text evidence="2">Homodimer. Interacts with IFNGR1 (via extracellular domain); this interaction promotes IFNGR1 dimerization.</text>
</comment>
<comment type="subcellular location">
    <subcellularLocation>
        <location evidence="2">Secreted</location>
    </subcellularLocation>
</comment>
<comment type="tissue specificity">
    <text>Released primarily from activated T lymphocytes.</text>
</comment>
<comment type="similarity">
    <text evidence="5">Belongs to the type II (or gamma) interferon family.</text>
</comment>
<organism>
    <name type="scientific">Mesocricetus auratus</name>
    <name type="common">Golden hamster</name>
    <dbReference type="NCBI Taxonomy" id="10036"/>
    <lineage>
        <taxon>Eukaryota</taxon>
        <taxon>Metazoa</taxon>
        <taxon>Chordata</taxon>
        <taxon>Craniata</taxon>
        <taxon>Vertebrata</taxon>
        <taxon>Euteleostomi</taxon>
        <taxon>Mammalia</taxon>
        <taxon>Eutheria</taxon>
        <taxon>Euarchontoglires</taxon>
        <taxon>Glires</taxon>
        <taxon>Rodentia</taxon>
        <taxon>Myomorpha</taxon>
        <taxon>Muroidea</taxon>
        <taxon>Cricetidae</taxon>
        <taxon>Cricetinae</taxon>
        <taxon>Mesocricetus</taxon>
    </lineage>
</organism>
<reference key="1">
    <citation type="journal article" date="1998" name="Infect. Immun.">
        <title>Cloning of Syrian hamster (Mesocricetus auratus) cytokine cDNAs and analysis of cytokine mRNA expression in experimental visceral leishmaniasis.</title>
        <authorList>
            <person name="Melby P.C."/>
            <person name="Tryon V.V."/>
            <person name="Chandrasekar B."/>
            <person name="Freeman G.L."/>
        </authorList>
    </citation>
    <scope>NUCLEOTIDE SEQUENCE [MRNA]</scope>
</reference>
<keyword id="KW-0051">Antiviral defense</keyword>
<keyword id="KW-0202">Cytokine</keyword>
<keyword id="KW-0325">Glycoprotein</keyword>
<keyword id="KW-0341">Growth regulation</keyword>
<keyword id="KW-0873">Pyrrolidone carboxylic acid</keyword>
<keyword id="KW-1185">Reference proteome</keyword>
<keyword id="KW-0964">Secreted</keyword>
<keyword id="KW-0732">Signal</keyword>
<dbReference type="EMBL" id="AF034482">
    <property type="protein sequence ID" value="AAC53580.1"/>
    <property type="molecule type" value="mRNA"/>
</dbReference>
<dbReference type="RefSeq" id="NP_001268560.1">
    <property type="nucleotide sequence ID" value="NM_001281631.1"/>
</dbReference>
<dbReference type="SMR" id="O35497"/>
<dbReference type="STRING" id="10036.ENSMAUP00000013711"/>
<dbReference type="GlyCosmos" id="O35497">
    <property type="glycosylation" value="2 sites, No reported glycans"/>
</dbReference>
<dbReference type="GeneID" id="101825431"/>
<dbReference type="KEGG" id="maua:101825431"/>
<dbReference type="CTD" id="3458"/>
<dbReference type="eggNOG" id="ENOG502SBGW">
    <property type="taxonomic scope" value="Eukaryota"/>
</dbReference>
<dbReference type="OrthoDB" id="9937106at2759"/>
<dbReference type="Proteomes" id="UP000189706">
    <property type="component" value="Unplaced"/>
</dbReference>
<dbReference type="GO" id="GO:0005615">
    <property type="term" value="C:extracellular space"/>
    <property type="evidence" value="ECO:0007669"/>
    <property type="project" value="UniProtKB-KW"/>
</dbReference>
<dbReference type="GO" id="GO:0005125">
    <property type="term" value="F:cytokine activity"/>
    <property type="evidence" value="ECO:0007669"/>
    <property type="project" value="UniProtKB-KW"/>
</dbReference>
<dbReference type="GO" id="GO:0005133">
    <property type="term" value="F:type II interferon receptor binding"/>
    <property type="evidence" value="ECO:0007669"/>
    <property type="project" value="InterPro"/>
</dbReference>
<dbReference type="GO" id="GO:0002250">
    <property type="term" value="P:adaptive immune response"/>
    <property type="evidence" value="ECO:0007669"/>
    <property type="project" value="TreeGrafter"/>
</dbReference>
<dbReference type="GO" id="GO:0051607">
    <property type="term" value="P:defense response to virus"/>
    <property type="evidence" value="ECO:0007669"/>
    <property type="project" value="UniProtKB-KW"/>
</dbReference>
<dbReference type="GO" id="GO:0006959">
    <property type="term" value="P:humoral immune response"/>
    <property type="evidence" value="ECO:0007669"/>
    <property type="project" value="TreeGrafter"/>
</dbReference>
<dbReference type="GO" id="GO:0010508">
    <property type="term" value="P:positive regulation of autophagy"/>
    <property type="evidence" value="ECO:0000250"/>
    <property type="project" value="UniProtKB"/>
</dbReference>
<dbReference type="FunFam" id="1.20.1250.10:FF:000007">
    <property type="entry name" value="Interferon gamma"/>
    <property type="match status" value="1"/>
</dbReference>
<dbReference type="Gene3D" id="1.20.1250.10">
    <property type="match status" value="1"/>
</dbReference>
<dbReference type="InterPro" id="IPR009079">
    <property type="entry name" value="4_helix_cytokine-like_core"/>
</dbReference>
<dbReference type="InterPro" id="IPR002069">
    <property type="entry name" value="Interferon_gamma"/>
</dbReference>
<dbReference type="PANTHER" id="PTHR11419">
    <property type="entry name" value="INTERFERON GAMMA"/>
    <property type="match status" value="1"/>
</dbReference>
<dbReference type="PANTHER" id="PTHR11419:SF0">
    <property type="entry name" value="INTERFERON GAMMA"/>
    <property type="match status" value="1"/>
</dbReference>
<dbReference type="Pfam" id="PF00714">
    <property type="entry name" value="IFN-gamma"/>
    <property type="match status" value="1"/>
</dbReference>
<dbReference type="PIRSF" id="PIRSF001936">
    <property type="entry name" value="IFN-gamma"/>
    <property type="match status" value="1"/>
</dbReference>
<dbReference type="SUPFAM" id="SSF47266">
    <property type="entry name" value="4-helical cytokines"/>
    <property type="match status" value="1"/>
</dbReference>
<sequence length="174" mass="19741">MHTTRCILALLLCLTQAMSGCYCQGTLIEEIENLKKYFNSSSLDVVNGGDLVFNILTNWQKAGDTKIIESQIVSFYFKLFEALKDNQAIQRSIDTIKADLFANFFNSSMEKLNDFVKLTKIPVNDLQVQRKAVNELISVMPHLSRKLSLRKRKRSRCCFGGGNRPNKNILASNI</sequence>